<reference key="1">
    <citation type="journal article" date="1998" name="J. Biol. Chem.">
        <title>Characterization of a fungal maleylacetoacetate isomerase gene and identification of its human homologue.</title>
        <authorList>
            <person name="Fernandez-Canon J.M."/>
            <person name="Penalva M.A."/>
        </authorList>
    </citation>
    <scope>NUCLEOTIDE SEQUENCE [GENOMIC DNA]</scope>
    <scope>CATALYTIC ACTIVITY</scope>
    <scope>INDUCTION</scope>
    <source>
        <strain>biA1</strain>
    </source>
</reference>
<reference key="2">
    <citation type="journal article" date="2005" name="Nature">
        <title>Sequencing of Aspergillus nidulans and comparative analysis with A. fumigatus and A. oryzae.</title>
        <authorList>
            <person name="Galagan J.E."/>
            <person name="Calvo S.E."/>
            <person name="Cuomo C."/>
            <person name="Ma L.-J."/>
            <person name="Wortman J.R."/>
            <person name="Batzoglou S."/>
            <person name="Lee S.-I."/>
            <person name="Bastuerkmen M."/>
            <person name="Spevak C.C."/>
            <person name="Clutterbuck J."/>
            <person name="Kapitonov V."/>
            <person name="Jurka J."/>
            <person name="Scazzocchio C."/>
            <person name="Farman M.L."/>
            <person name="Butler J."/>
            <person name="Purcell S."/>
            <person name="Harris S."/>
            <person name="Braus G.H."/>
            <person name="Draht O."/>
            <person name="Busch S."/>
            <person name="D'Enfert C."/>
            <person name="Bouchier C."/>
            <person name="Goldman G.H."/>
            <person name="Bell-Pedersen D."/>
            <person name="Griffiths-Jones S."/>
            <person name="Doonan J.H."/>
            <person name="Yu J."/>
            <person name="Vienken K."/>
            <person name="Pain A."/>
            <person name="Freitag M."/>
            <person name="Selker E.U."/>
            <person name="Archer D.B."/>
            <person name="Penalva M.A."/>
            <person name="Oakley B.R."/>
            <person name="Momany M."/>
            <person name="Tanaka T."/>
            <person name="Kumagai T."/>
            <person name="Asai K."/>
            <person name="Machida M."/>
            <person name="Nierman W.C."/>
            <person name="Denning D.W."/>
            <person name="Caddick M.X."/>
            <person name="Hynes M."/>
            <person name="Paoletti M."/>
            <person name="Fischer R."/>
            <person name="Miller B.L."/>
            <person name="Dyer P.S."/>
            <person name="Sachs M.S."/>
            <person name="Osmani S.A."/>
            <person name="Birren B.W."/>
        </authorList>
    </citation>
    <scope>NUCLEOTIDE SEQUENCE [LARGE SCALE GENOMIC DNA]</scope>
    <source>
        <strain>FGSC A4 / ATCC 38163 / CBS 112.46 / NRRL 194 / M139</strain>
    </source>
</reference>
<reference key="3">
    <citation type="journal article" date="2009" name="Fungal Genet. Biol.">
        <title>The 2008 update of the Aspergillus nidulans genome annotation: a community effort.</title>
        <authorList>
            <person name="Wortman J.R."/>
            <person name="Gilsenan J.M."/>
            <person name="Joardar V."/>
            <person name="Deegan J."/>
            <person name="Clutterbuck J."/>
            <person name="Andersen M.R."/>
            <person name="Archer D."/>
            <person name="Bencina M."/>
            <person name="Braus G."/>
            <person name="Coutinho P."/>
            <person name="von Dohren H."/>
            <person name="Doonan J."/>
            <person name="Driessen A.J."/>
            <person name="Durek P."/>
            <person name="Espeso E."/>
            <person name="Fekete E."/>
            <person name="Flipphi M."/>
            <person name="Estrada C.G."/>
            <person name="Geysens S."/>
            <person name="Goldman G."/>
            <person name="de Groot P.W."/>
            <person name="Hansen K."/>
            <person name="Harris S.D."/>
            <person name="Heinekamp T."/>
            <person name="Helmstaedt K."/>
            <person name="Henrissat B."/>
            <person name="Hofmann G."/>
            <person name="Homan T."/>
            <person name="Horio T."/>
            <person name="Horiuchi H."/>
            <person name="James S."/>
            <person name="Jones M."/>
            <person name="Karaffa L."/>
            <person name="Karanyi Z."/>
            <person name="Kato M."/>
            <person name="Keller N."/>
            <person name="Kelly D.E."/>
            <person name="Kiel J.A."/>
            <person name="Kim J.M."/>
            <person name="van der Klei I.J."/>
            <person name="Klis F.M."/>
            <person name="Kovalchuk A."/>
            <person name="Krasevec N."/>
            <person name="Kubicek C.P."/>
            <person name="Liu B."/>
            <person name="Maccabe A."/>
            <person name="Meyer V."/>
            <person name="Mirabito P."/>
            <person name="Miskei M."/>
            <person name="Mos M."/>
            <person name="Mullins J."/>
            <person name="Nelson D.R."/>
            <person name="Nielsen J."/>
            <person name="Oakley B.R."/>
            <person name="Osmani S.A."/>
            <person name="Pakula T."/>
            <person name="Paszewski A."/>
            <person name="Paulsen I."/>
            <person name="Pilsyk S."/>
            <person name="Pocsi I."/>
            <person name="Punt P.J."/>
            <person name="Ram A.F."/>
            <person name="Ren Q."/>
            <person name="Robellet X."/>
            <person name="Robson G."/>
            <person name="Seiboth B."/>
            <person name="van Solingen P."/>
            <person name="Specht T."/>
            <person name="Sun J."/>
            <person name="Taheri-Talesh N."/>
            <person name="Takeshita N."/>
            <person name="Ussery D."/>
            <person name="vanKuyk P.A."/>
            <person name="Visser H."/>
            <person name="van de Vondervoort P.J."/>
            <person name="de Vries R.P."/>
            <person name="Walton J."/>
            <person name="Xiang X."/>
            <person name="Xiong Y."/>
            <person name="Zeng A.P."/>
            <person name="Brandt B.W."/>
            <person name="Cornell M.J."/>
            <person name="van den Hondel C.A."/>
            <person name="Visser J."/>
            <person name="Oliver S.G."/>
            <person name="Turner G."/>
        </authorList>
    </citation>
    <scope>GENOME REANNOTATION</scope>
    <source>
        <strain>FGSC A4 / ATCC 38163 / CBS 112.46 / NRRL 194 / M139</strain>
    </source>
</reference>
<organism>
    <name type="scientific">Emericella nidulans (strain FGSC A4 / ATCC 38163 / CBS 112.46 / NRRL 194 / M139)</name>
    <name type="common">Aspergillus nidulans</name>
    <dbReference type="NCBI Taxonomy" id="227321"/>
    <lineage>
        <taxon>Eukaryota</taxon>
        <taxon>Fungi</taxon>
        <taxon>Dikarya</taxon>
        <taxon>Ascomycota</taxon>
        <taxon>Pezizomycotina</taxon>
        <taxon>Eurotiomycetes</taxon>
        <taxon>Eurotiomycetidae</taxon>
        <taxon>Eurotiales</taxon>
        <taxon>Aspergillaceae</taxon>
        <taxon>Aspergillus</taxon>
        <taxon>Aspergillus subgen. Nidulantes</taxon>
    </lineage>
</organism>
<keyword id="KW-0963">Cytoplasm</keyword>
<keyword id="KW-0413">Isomerase</keyword>
<keyword id="KW-0585">Phenylalanine catabolism</keyword>
<keyword id="KW-1185">Reference proteome</keyword>
<keyword id="KW-0828">Tyrosine catabolism</keyword>
<dbReference type="EC" id="5.2.1.2" evidence="2"/>
<dbReference type="EMBL" id="AJ001837">
    <property type="protein sequence ID" value="CAA05044.1"/>
    <property type="molecule type" value="Genomic_DNA"/>
</dbReference>
<dbReference type="EMBL" id="AJ001836">
    <property type="protein sequence ID" value="CAA05041.1"/>
    <property type="molecule type" value="Genomic_DNA"/>
</dbReference>
<dbReference type="EMBL" id="AACD01000029">
    <property type="protein sequence ID" value="EAA65060.1"/>
    <property type="molecule type" value="Genomic_DNA"/>
</dbReference>
<dbReference type="EMBL" id="BN001307">
    <property type="protein sequence ID" value="CBF85776.1"/>
    <property type="molecule type" value="Genomic_DNA"/>
</dbReference>
<dbReference type="RefSeq" id="XP_659499.1">
    <property type="nucleotide sequence ID" value="XM_654407.1"/>
</dbReference>
<dbReference type="SMR" id="O43123"/>
<dbReference type="STRING" id="227321.O43123"/>
<dbReference type="EnsemblFungi" id="CBF85776">
    <property type="protein sequence ID" value="CBF85776"/>
    <property type="gene ID" value="ANIA_01895"/>
</dbReference>
<dbReference type="KEGG" id="ani:ANIA_01895"/>
<dbReference type="VEuPathDB" id="FungiDB:AN1895"/>
<dbReference type="eggNOG" id="KOG0868">
    <property type="taxonomic scope" value="Eukaryota"/>
</dbReference>
<dbReference type="HOGENOM" id="CLU_011226_20_0_1"/>
<dbReference type="InParanoid" id="O43123"/>
<dbReference type="OMA" id="VYNAHRF"/>
<dbReference type="OrthoDB" id="202840at2759"/>
<dbReference type="BioCyc" id="MetaCyc:MONOMER-12045"/>
<dbReference type="BRENDA" id="5.2.1.2">
    <property type="organism ID" value="517"/>
</dbReference>
<dbReference type="UniPathway" id="UPA00139">
    <property type="reaction ID" value="UER00340"/>
</dbReference>
<dbReference type="Proteomes" id="UP000000560">
    <property type="component" value="Chromosome VII"/>
</dbReference>
<dbReference type="GO" id="GO:0005739">
    <property type="term" value="C:mitochondrion"/>
    <property type="evidence" value="ECO:0000318"/>
    <property type="project" value="GO_Central"/>
</dbReference>
<dbReference type="GO" id="GO:0004364">
    <property type="term" value="F:glutathione transferase activity"/>
    <property type="evidence" value="ECO:0000318"/>
    <property type="project" value="GO_Central"/>
</dbReference>
<dbReference type="GO" id="GO:0016034">
    <property type="term" value="F:maleylacetoacetate isomerase activity"/>
    <property type="evidence" value="ECO:0000314"/>
    <property type="project" value="AspGD"/>
</dbReference>
<dbReference type="GO" id="GO:0006749">
    <property type="term" value="P:glutathione metabolic process"/>
    <property type="evidence" value="ECO:0000318"/>
    <property type="project" value="GO_Central"/>
</dbReference>
<dbReference type="GO" id="GO:0006559">
    <property type="term" value="P:L-phenylalanine catabolic process"/>
    <property type="evidence" value="ECO:0000314"/>
    <property type="project" value="AspGD"/>
</dbReference>
<dbReference type="GO" id="GO:0006572">
    <property type="term" value="P:tyrosine catabolic process"/>
    <property type="evidence" value="ECO:0007669"/>
    <property type="project" value="UniProtKB-KW"/>
</dbReference>
<dbReference type="CDD" id="cd03191">
    <property type="entry name" value="GST_C_Zeta"/>
    <property type="match status" value="1"/>
</dbReference>
<dbReference type="CDD" id="cd03042">
    <property type="entry name" value="GST_N_Zeta"/>
    <property type="match status" value="1"/>
</dbReference>
<dbReference type="FunFam" id="1.20.1050.10:FF:000010">
    <property type="entry name" value="Maleylacetoacetate isomerase isoform 1"/>
    <property type="match status" value="1"/>
</dbReference>
<dbReference type="Gene3D" id="1.20.1050.10">
    <property type="match status" value="1"/>
</dbReference>
<dbReference type="Gene3D" id="3.40.30.10">
    <property type="entry name" value="Glutaredoxin"/>
    <property type="match status" value="1"/>
</dbReference>
<dbReference type="InterPro" id="IPR010987">
    <property type="entry name" value="Glutathione-S-Trfase_C-like"/>
</dbReference>
<dbReference type="InterPro" id="IPR036282">
    <property type="entry name" value="Glutathione-S-Trfase_C_sf"/>
</dbReference>
<dbReference type="InterPro" id="IPR040079">
    <property type="entry name" value="Glutathione_S-Trfase"/>
</dbReference>
<dbReference type="InterPro" id="IPR004045">
    <property type="entry name" value="Glutathione_S-Trfase_N"/>
</dbReference>
<dbReference type="InterPro" id="IPR005955">
    <property type="entry name" value="GST_Zeta"/>
</dbReference>
<dbReference type="InterPro" id="IPR034330">
    <property type="entry name" value="GST_Zeta_C"/>
</dbReference>
<dbReference type="InterPro" id="IPR034333">
    <property type="entry name" value="GST_Zeta_N"/>
</dbReference>
<dbReference type="InterPro" id="IPR036249">
    <property type="entry name" value="Thioredoxin-like_sf"/>
</dbReference>
<dbReference type="NCBIfam" id="TIGR01262">
    <property type="entry name" value="maiA"/>
    <property type="match status" value="1"/>
</dbReference>
<dbReference type="PANTHER" id="PTHR42673">
    <property type="entry name" value="MALEYLACETOACETATE ISOMERASE"/>
    <property type="match status" value="1"/>
</dbReference>
<dbReference type="PANTHER" id="PTHR42673:SF4">
    <property type="entry name" value="MALEYLACETOACETATE ISOMERASE"/>
    <property type="match status" value="1"/>
</dbReference>
<dbReference type="Pfam" id="PF13410">
    <property type="entry name" value="GST_C_2"/>
    <property type="match status" value="1"/>
</dbReference>
<dbReference type="Pfam" id="PF13409">
    <property type="entry name" value="GST_N_2"/>
    <property type="match status" value="1"/>
</dbReference>
<dbReference type="SFLD" id="SFLDS00019">
    <property type="entry name" value="Glutathione_Transferase_(cytos"/>
    <property type="match status" value="1"/>
</dbReference>
<dbReference type="SFLD" id="SFLDG00358">
    <property type="entry name" value="Main_(cytGST)"/>
    <property type="match status" value="1"/>
</dbReference>
<dbReference type="SUPFAM" id="SSF47616">
    <property type="entry name" value="GST C-terminal domain-like"/>
    <property type="match status" value="1"/>
</dbReference>
<dbReference type="SUPFAM" id="SSF52833">
    <property type="entry name" value="Thioredoxin-like"/>
    <property type="match status" value="1"/>
</dbReference>
<dbReference type="PROSITE" id="PS50405">
    <property type="entry name" value="GST_CTER"/>
    <property type="match status" value="1"/>
</dbReference>
<dbReference type="PROSITE" id="PS50404">
    <property type="entry name" value="GST_NTER"/>
    <property type="match status" value="1"/>
</dbReference>
<gene>
    <name type="primary">maiA</name>
    <name type="ORF">AN1895</name>
</gene>
<accession>O43123</accession>
<accession>C8VKJ6</accession>
<accession>Q5BC35</accession>
<comment type="catalytic activity">
    <reaction evidence="2">
        <text>4-maleylacetoacetate = 4-fumarylacetoacetate</text>
        <dbReference type="Rhea" id="RHEA:14817"/>
        <dbReference type="ChEBI" id="CHEBI:17105"/>
        <dbReference type="ChEBI" id="CHEBI:18034"/>
        <dbReference type="EC" id="5.2.1.2"/>
    </reaction>
</comment>
<comment type="cofactor">
    <cofactor>
        <name>glutathione</name>
        <dbReference type="ChEBI" id="CHEBI:57925"/>
    </cofactor>
</comment>
<comment type="pathway">
    <text>Amino-acid degradation; L-phenylalanine degradation; acetoacetate and fumarate from L-phenylalanine: step 5/6.</text>
</comment>
<comment type="subcellular location">
    <subcellularLocation>
        <location evidence="1">Cytoplasm</location>
    </subcellularLocation>
</comment>
<comment type="induction">
    <text evidence="2">Induced by phenylalanine or phenylacetate. Not induced by glucose.</text>
</comment>
<comment type="similarity">
    <text evidence="3">Belongs to the GST superfamily. Zeta family.</text>
</comment>
<evidence type="ECO:0000250" key="1"/>
<evidence type="ECO:0000269" key="2">
    <source>
    </source>
</evidence>
<evidence type="ECO:0000305" key="3"/>
<feature type="chain" id="PRO_0000186028" description="Maleylacetoacetate isomerase">
    <location>
        <begin position="1"/>
        <end position="230"/>
    </location>
</feature>
<feature type="domain" description="GST N-terminal">
    <location>
        <begin position="7"/>
        <end position="95"/>
    </location>
</feature>
<feature type="domain" description="GST C-terminal">
    <location>
        <begin position="104"/>
        <end position="226"/>
    </location>
</feature>
<feature type="binding site" evidence="1">
    <location>
        <begin position="17"/>
        <end position="22"/>
    </location>
    <ligand>
        <name>glutathione</name>
        <dbReference type="ChEBI" id="CHEBI:57925"/>
    </ligand>
</feature>
<feature type="binding site" evidence="1">
    <location>
        <position position="46"/>
    </location>
    <ligand>
        <name>glutathione</name>
        <dbReference type="ChEBI" id="CHEBI:57925"/>
    </ligand>
</feature>
<feature type="binding site" evidence="1">
    <location>
        <position position="60"/>
    </location>
    <ligand>
        <name>glutathione</name>
        <dbReference type="ChEBI" id="CHEBI:57925"/>
    </ligand>
</feature>
<feature type="binding site" evidence="1">
    <location>
        <begin position="79"/>
        <end position="80"/>
    </location>
    <ligand>
        <name>glutathione</name>
        <dbReference type="ChEBI" id="CHEBI:57925"/>
    </ligand>
</feature>
<feature type="binding site" evidence="1">
    <location>
        <position position="123"/>
    </location>
    <ligand>
        <name>glutathione</name>
        <dbReference type="ChEBI" id="CHEBI:57925"/>
    </ligand>
</feature>
<feature type="binding site" evidence="1">
    <location>
        <begin position="127"/>
        <end position="129"/>
    </location>
    <ligand>
        <name>glutathione</name>
        <dbReference type="ChEBI" id="CHEBI:57925"/>
    </ligand>
</feature>
<protein>
    <recommendedName>
        <fullName>Maleylacetoacetate isomerase</fullName>
        <shortName>MAAI</shortName>
        <ecNumber evidence="2">5.2.1.2</ecNumber>
    </recommendedName>
</protein>
<name>MAAI_EMENI</name>
<sequence>MSTNSDLRVTLYTYFRSSCSARLRIALALRSISYTSVPINLLKGEQSSTKNTAVNPSATVPTLIIEHVDRSQSPITITQSLAALEYLDEAFPDNPNPLLPPISNPQQRALVRSLASIIACDIQPVTNLRILQRVAPFGVDRAAWSKDLIEAGFAAYEAIARDSAGVFSVGDTITMADVCLIPAVWGAERAGVNLGQYPTIKRVAEALEKENAVKEGHWRTQQDTPTEFRC</sequence>
<proteinExistence type="evidence at protein level"/>